<name>Y205_PASMU</name>
<evidence type="ECO:0000255" key="1">
    <source>
        <dbReference type="HAMAP-Rule" id="MF_00274"/>
    </source>
</evidence>
<gene>
    <name type="ordered locus">PM0205</name>
</gene>
<dbReference type="EMBL" id="AE004439">
    <property type="protein sequence ID" value="AAK02289.1"/>
    <property type="molecule type" value="Genomic_DNA"/>
</dbReference>
<dbReference type="RefSeq" id="WP_005723457.1">
    <property type="nucleotide sequence ID" value="NC_002663.1"/>
</dbReference>
<dbReference type="SMR" id="P57825"/>
<dbReference type="STRING" id="272843.PM0205"/>
<dbReference type="EnsemblBacteria" id="AAK02289">
    <property type="protein sequence ID" value="AAK02289"/>
    <property type="gene ID" value="PM0205"/>
</dbReference>
<dbReference type="KEGG" id="pmu:PM0205"/>
<dbReference type="HOGENOM" id="CLU_140930_0_0_6"/>
<dbReference type="OrthoDB" id="9808738at2"/>
<dbReference type="Proteomes" id="UP000000809">
    <property type="component" value="Chromosome"/>
</dbReference>
<dbReference type="GO" id="GO:0043590">
    <property type="term" value="C:bacterial nucleoid"/>
    <property type="evidence" value="ECO:0007669"/>
    <property type="project" value="UniProtKB-UniRule"/>
</dbReference>
<dbReference type="GO" id="GO:0005829">
    <property type="term" value="C:cytosol"/>
    <property type="evidence" value="ECO:0007669"/>
    <property type="project" value="TreeGrafter"/>
</dbReference>
<dbReference type="GO" id="GO:0003677">
    <property type="term" value="F:DNA binding"/>
    <property type="evidence" value="ECO:0007669"/>
    <property type="project" value="UniProtKB-UniRule"/>
</dbReference>
<dbReference type="FunFam" id="3.30.1310.10:FF:000001">
    <property type="entry name" value="Nucleoid-associated protein YbaB"/>
    <property type="match status" value="1"/>
</dbReference>
<dbReference type="Gene3D" id="3.30.1310.10">
    <property type="entry name" value="Nucleoid-associated protein YbaB-like domain"/>
    <property type="match status" value="1"/>
</dbReference>
<dbReference type="HAMAP" id="MF_00274">
    <property type="entry name" value="DNA_YbaB_EbfC"/>
    <property type="match status" value="1"/>
</dbReference>
<dbReference type="InterPro" id="IPR036894">
    <property type="entry name" value="YbaB-like_sf"/>
</dbReference>
<dbReference type="InterPro" id="IPR004401">
    <property type="entry name" value="YbaB/EbfC"/>
</dbReference>
<dbReference type="NCBIfam" id="TIGR00103">
    <property type="entry name" value="DNA_YbaB_EbfC"/>
    <property type="match status" value="1"/>
</dbReference>
<dbReference type="PANTHER" id="PTHR33449">
    <property type="entry name" value="NUCLEOID-ASSOCIATED PROTEIN YBAB"/>
    <property type="match status" value="1"/>
</dbReference>
<dbReference type="PANTHER" id="PTHR33449:SF1">
    <property type="entry name" value="NUCLEOID-ASSOCIATED PROTEIN YBAB"/>
    <property type="match status" value="1"/>
</dbReference>
<dbReference type="Pfam" id="PF02575">
    <property type="entry name" value="YbaB_DNA_bd"/>
    <property type="match status" value="1"/>
</dbReference>
<dbReference type="PIRSF" id="PIRSF004555">
    <property type="entry name" value="UCP004555"/>
    <property type="match status" value="1"/>
</dbReference>
<dbReference type="SUPFAM" id="SSF82607">
    <property type="entry name" value="YbaB-like"/>
    <property type="match status" value="1"/>
</dbReference>
<protein>
    <recommendedName>
        <fullName evidence="1">Nucleoid-associated protein PM0205</fullName>
    </recommendedName>
</protein>
<keyword id="KW-0963">Cytoplasm</keyword>
<keyword id="KW-0238">DNA-binding</keyword>
<keyword id="KW-1185">Reference proteome</keyword>
<sequence length="109" mass="12000">MFGKGGLGNLMKQAQQMQDRMQKMQEEIAQLEVTGESGAGLVKITINGAHNCRRVEIDPSLMEDDKDMLEDLIAAAFNDAVRRAEELQKEKMASVTAGMALPPGFKMPF</sequence>
<comment type="function">
    <text evidence="1">Binds to DNA and alters its conformation. May be involved in regulation of gene expression, nucleoid organization and DNA protection.</text>
</comment>
<comment type="subunit">
    <text evidence="1">Homodimer.</text>
</comment>
<comment type="subcellular location">
    <subcellularLocation>
        <location evidence="1">Cytoplasm</location>
        <location evidence="1">Nucleoid</location>
    </subcellularLocation>
</comment>
<comment type="similarity">
    <text evidence="1">Belongs to the YbaB/EbfC family.</text>
</comment>
<reference key="1">
    <citation type="journal article" date="2001" name="Proc. Natl. Acad. Sci. U.S.A.">
        <title>Complete genomic sequence of Pasteurella multocida Pm70.</title>
        <authorList>
            <person name="May B.J."/>
            <person name="Zhang Q."/>
            <person name="Li L.L."/>
            <person name="Paustian M.L."/>
            <person name="Whittam T.S."/>
            <person name="Kapur V."/>
        </authorList>
    </citation>
    <scope>NUCLEOTIDE SEQUENCE [LARGE SCALE GENOMIC DNA]</scope>
    <source>
        <strain>Pm70</strain>
    </source>
</reference>
<feature type="chain" id="PRO_0000170418" description="Nucleoid-associated protein PM0205">
    <location>
        <begin position="1"/>
        <end position="109"/>
    </location>
</feature>
<proteinExistence type="inferred from homology"/>
<accession>P57825</accession>
<organism>
    <name type="scientific">Pasteurella multocida (strain Pm70)</name>
    <dbReference type="NCBI Taxonomy" id="272843"/>
    <lineage>
        <taxon>Bacteria</taxon>
        <taxon>Pseudomonadati</taxon>
        <taxon>Pseudomonadota</taxon>
        <taxon>Gammaproteobacteria</taxon>
        <taxon>Pasteurellales</taxon>
        <taxon>Pasteurellaceae</taxon>
        <taxon>Pasteurella</taxon>
    </lineage>
</organism>